<organism>
    <name type="scientific">Escherichia coli (strain K12 / DH10B)</name>
    <dbReference type="NCBI Taxonomy" id="316385"/>
    <lineage>
        <taxon>Bacteria</taxon>
        <taxon>Pseudomonadati</taxon>
        <taxon>Pseudomonadota</taxon>
        <taxon>Gammaproteobacteria</taxon>
        <taxon>Enterobacterales</taxon>
        <taxon>Enterobacteriaceae</taxon>
        <taxon>Escherichia</taxon>
    </lineage>
</organism>
<dbReference type="EMBL" id="CP000948">
    <property type="protein sequence ID" value="ACB04402.1"/>
    <property type="molecule type" value="Genomic_DNA"/>
</dbReference>
<dbReference type="RefSeq" id="WP_000903373.1">
    <property type="nucleotide sequence ID" value="NC_010473.1"/>
</dbReference>
<dbReference type="SMR" id="B1X6J2"/>
<dbReference type="KEGG" id="ecd:ECDH10B_3518"/>
<dbReference type="HOGENOM" id="CLU_166087_2_1_6"/>
<dbReference type="GO" id="GO:1990228">
    <property type="term" value="C:sulfurtransferase complex"/>
    <property type="evidence" value="ECO:0007669"/>
    <property type="project" value="TreeGrafter"/>
</dbReference>
<dbReference type="GO" id="GO:0002143">
    <property type="term" value="P:tRNA wobble position uridine thiolation"/>
    <property type="evidence" value="ECO:0007669"/>
    <property type="project" value="InterPro"/>
</dbReference>
<dbReference type="FunFam" id="3.40.1260.10:FF:000002">
    <property type="entry name" value="Sulfurtransferase TusB"/>
    <property type="match status" value="1"/>
</dbReference>
<dbReference type="Gene3D" id="3.40.1260.10">
    <property type="entry name" value="DsrEFH-like"/>
    <property type="match status" value="1"/>
</dbReference>
<dbReference type="HAMAP" id="MF_01564">
    <property type="entry name" value="Thiourid_synth_B"/>
    <property type="match status" value="1"/>
</dbReference>
<dbReference type="InterPro" id="IPR027396">
    <property type="entry name" value="DsrEFH-like"/>
</dbReference>
<dbReference type="InterPro" id="IPR023526">
    <property type="entry name" value="Sulphur_relay_TusB"/>
</dbReference>
<dbReference type="InterPro" id="IPR007215">
    <property type="entry name" value="Sulphur_relay_TusB/DsrH"/>
</dbReference>
<dbReference type="NCBIfam" id="NF010035">
    <property type="entry name" value="PRK13510.1"/>
    <property type="match status" value="1"/>
</dbReference>
<dbReference type="NCBIfam" id="TIGR03011">
    <property type="entry name" value="sulf_tusB_dsrH"/>
    <property type="match status" value="1"/>
</dbReference>
<dbReference type="PANTHER" id="PTHR37526">
    <property type="entry name" value="PROTEIN TUSB"/>
    <property type="match status" value="1"/>
</dbReference>
<dbReference type="PANTHER" id="PTHR37526:SF1">
    <property type="entry name" value="PROTEIN TUSB"/>
    <property type="match status" value="1"/>
</dbReference>
<dbReference type="Pfam" id="PF04077">
    <property type="entry name" value="DsrH"/>
    <property type="match status" value="1"/>
</dbReference>
<dbReference type="SUPFAM" id="SSF75169">
    <property type="entry name" value="DsrEFH-like"/>
    <property type="match status" value="1"/>
</dbReference>
<gene>
    <name evidence="1" type="primary">tusB</name>
    <name type="ordered locus">ECDH10B_3518</name>
</gene>
<name>TUSB_ECODH</name>
<reference key="1">
    <citation type="journal article" date="2008" name="J. Bacteriol.">
        <title>The complete genome sequence of Escherichia coli DH10B: insights into the biology of a laboratory workhorse.</title>
        <authorList>
            <person name="Durfee T."/>
            <person name="Nelson R."/>
            <person name="Baldwin S."/>
            <person name="Plunkett G. III"/>
            <person name="Burland V."/>
            <person name="Mau B."/>
            <person name="Petrosino J.F."/>
            <person name="Qin X."/>
            <person name="Muzny D.M."/>
            <person name="Ayele M."/>
            <person name="Gibbs R.A."/>
            <person name="Csorgo B."/>
            <person name="Posfai G."/>
            <person name="Weinstock G.M."/>
            <person name="Blattner F.R."/>
        </authorList>
    </citation>
    <scope>NUCLEOTIDE SEQUENCE [LARGE SCALE GENOMIC DNA]</scope>
    <source>
        <strain>K12 / DH10B</strain>
    </source>
</reference>
<keyword id="KW-0963">Cytoplasm</keyword>
<keyword id="KW-0819">tRNA processing</keyword>
<protein>
    <recommendedName>
        <fullName evidence="1">Protein TusB</fullName>
    </recommendedName>
    <alternativeName>
        <fullName evidence="1">tRNA 2-thiouridine synthesizing protein B</fullName>
    </alternativeName>
</protein>
<proteinExistence type="inferred from homology"/>
<comment type="function">
    <text evidence="1">Part of a sulfur-relay system required for 2-thiolation of 5-methylaminomethyl-2-thiouridine (mnm(5)s(2)U) at tRNA wobble positions.</text>
</comment>
<comment type="subunit">
    <text evidence="1">Heterohexamer, formed by a dimer of trimers. The hexameric TusBCD complex contains 2 copies each of TusB, TusC and TusD. The TusBCD complex interacts with TusE.</text>
</comment>
<comment type="subcellular location">
    <subcellularLocation>
        <location evidence="1">Cytoplasm</location>
    </subcellularLocation>
</comment>
<comment type="similarity">
    <text evidence="1">Belongs to the DsrH/TusB family.</text>
</comment>
<sequence>MLHTLHRSPWLTDFAALLRLLSEGDELLLLQDGVTAAVDGNRYLESLRNAPIKVYALNEDLIARGLTGQISNDIILIDYTDFVRLTVKHPSQMAW</sequence>
<accession>B1X6J2</accession>
<feature type="chain" id="PRO_1000147179" description="Protein TusB">
    <location>
        <begin position="1"/>
        <end position="95"/>
    </location>
</feature>
<evidence type="ECO:0000255" key="1">
    <source>
        <dbReference type="HAMAP-Rule" id="MF_01564"/>
    </source>
</evidence>